<dbReference type="EMBL" id="CP001114">
    <property type="protein sequence ID" value="ACO46879.1"/>
    <property type="molecule type" value="Genomic_DNA"/>
</dbReference>
<dbReference type="RefSeq" id="WP_012694001.1">
    <property type="nucleotide sequence ID" value="NC_012526.1"/>
</dbReference>
<dbReference type="SMR" id="C1CXG2"/>
<dbReference type="STRING" id="546414.Deide_18910"/>
<dbReference type="PaxDb" id="546414-Deide_18910"/>
<dbReference type="KEGG" id="ddr:Deide_18910"/>
<dbReference type="eggNOG" id="COG0185">
    <property type="taxonomic scope" value="Bacteria"/>
</dbReference>
<dbReference type="HOGENOM" id="CLU_144911_0_1_0"/>
<dbReference type="OrthoDB" id="9797833at2"/>
<dbReference type="Proteomes" id="UP000002208">
    <property type="component" value="Chromosome"/>
</dbReference>
<dbReference type="GO" id="GO:0005737">
    <property type="term" value="C:cytoplasm"/>
    <property type="evidence" value="ECO:0007669"/>
    <property type="project" value="UniProtKB-ARBA"/>
</dbReference>
<dbReference type="GO" id="GO:0015935">
    <property type="term" value="C:small ribosomal subunit"/>
    <property type="evidence" value="ECO:0007669"/>
    <property type="project" value="InterPro"/>
</dbReference>
<dbReference type="GO" id="GO:0019843">
    <property type="term" value="F:rRNA binding"/>
    <property type="evidence" value="ECO:0007669"/>
    <property type="project" value="UniProtKB-UniRule"/>
</dbReference>
<dbReference type="GO" id="GO:0003735">
    <property type="term" value="F:structural constituent of ribosome"/>
    <property type="evidence" value="ECO:0007669"/>
    <property type="project" value="InterPro"/>
</dbReference>
<dbReference type="GO" id="GO:0000028">
    <property type="term" value="P:ribosomal small subunit assembly"/>
    <property type="evidence" value="ECO:0007669"/>
    <property type="project" value="TreeGrafter"/>
</dbReference>
<dbReference type="GO" id="GO:0006412">
    <property type="term" value="P:translation"/>
    <property type="evidence" value="ECO:0007669"/>
    <property type="project" value="UniProtKB-UniRule"/>
</dbReference>
<dbReference type="FunFam" id="3.30.860.10:FF:000001">
    <property type="entry name" value="30S ribosomal protein S19"/>
    <property type="match status" value="1"/>
</dbReference>
<dbReference type="Gene3D" id="3.30.860.10">
    <property type="entry name" value="30s Ribosomal Protein S19, Chain A"/>
    <property type="match status" value="1"/>
</dbReference>
<dbReference type="HAMAP" id="MF_00531">
    <property type="entry name" value="Ribosomal_uS19"/>
    <property type="match status" value="1"/>
</dbReference>
<dbReference type="InterPro" id="IPR002222">
    <property type="entry name" value="Ribosomal_uS19"/>
</dbReference>
<dbReference type="InterPro" id="IPR005732">
    <property type="entry name" value="Ribosomal_uS19_bac-type"/>
</dbReference>
<dbReference type="InterPro" id="IPR020934">
    <property type="entry name" value="Ribosomal_uS19_CS"/>
</dbReference>
<dbReference type="InterPro" id="IPR023575">
    <property type="entry name" value="Ribosomal_uS19_SF"/>
</dbReference>
<dbReference type="NCBIfam" id="TIGR01050">
    <property type="entry name" value="rpsS_bact"/>
    <property type="match status" value="1"/>
</dbReference>
<dbReference type="PANTHER" id="PTHR11880">
    <property type="entry name" value="RIBOSOMAL PROTEIN S19P FAMILY MEMBER"/>
    <property type="match status" value="1"/>
</dbReference>
<dbReference type="PANTHER" id="PTHR11880:SF8">
    <property type="entry name" value="SMALL RIBOSOMAL SUBUNIT PROTEIN US19M"/>
    <property type="match status" value="1"/>
</dbReference>
<dbReference type="Pfam" id="PF00203">
    <property type="entry name" value="Ribosomal_S19"/>
    <property type="match status" value="1"/>
</dbReference>
<dbReference type="PIRSF" id="PIRSF002144">
    <property type="entry name" value="Ribosomal_S19"/>
    <property type="match status" value="1"/>
</dbReference>
<dbReference type="PRINTS" id="PR00975">
    <property type="entry name" value="RIBOSOMALS19"/>
</dbReference>
<dbReference type="SUPFAM" id="SSF54570">
    <property type="entry name" value="Ribosomal protein S19"/>
    <property type="match status" value="1"/>
</dbReference>
<dbReference type="PROSITE" id="PS00323">
    <property type="entry name" value="RIBOSOMAL_S19"/>
    <property type="match status" value="1"/>
</dbReference>
<reference key="1">
    <citation type="journal article" date="2009" name="PLoS Genet.">
        <title>Alliance of proteomics and genomics to unravel the specificities of Sahara bacterium Deinococcus deserti.</title>
        <authorList>
            <person name="de Groot A."/>
            <person name="Dulermo R."/>
            <person name="Ortet P."/>
            <person name="Blanchard L."/>
            <person name="Guerin P."/>
            <person name="Fernandez B."/>
            <person name="Vacherie B."/>
            <person name="Dossat C."/>
            <person name="Jolivet E."/>
            <person name="Siguier P."/>
            <person name="Chandler M."/>
            <person name="Barakat M."/>
            <person name="Dedieu A."/>
            <person name="Barbe V."/>
            <person name="Heulin T."/>
            <person name="Sommer S."/>
            <person name="Achouak W."/>
            <person name="Armengaud J."/>
        </authorList>
    </citation>
    <scope>NUCLEOTIDE SEQUENCE [LARGE SCALE GENOMIC DNA]</scope>
    <source>
        <strain>DSM 17065 / CIP 109153 / LMG 22923 / VCD115</strain>
    </source>
</reference>
<organism>
    <name type="scientific">Deinococcus deserti (strain DSM 17065 / CIP 109153 / LMG 22923 / VCD115)</name>
    <dbReference type="NCBI Taxonomy" id="546414"/>
    <lineage>
        <taxon>Bacteria</taxon>
        <taxon>Thermotogati</taxon>
        <taxon>Deinococcota</taxon>
        <taxon>Deinococci</taxon>
        <taxon>Deinococcales</taxon>
        <taxon>Deinococcaceae</taxon>
        <taxon>Deinococcus</taxon>
    </lineage>
</organism>
<keyword id="KW-1185">Reference proteome</keyword>
<keyword id="KW-0687">Ribonucleoprotein</keyword>
<keyword id="KW-0689">Ribosomal protein</keyword>
<keyword id="KW-0694">RNA-binding</keyword>
<keyword id="KW-0699">rRNA-binding</keyword>
<comment type="function">
    <text evidence="1">Protein S19 forms a complex with S13 that binds strongly to the 16S ribosomal RNA.</text>
</comment>
<comment type="similarity">
    <text evidence="1">Belongs to the universal ribosomal protein uS19 family.</text>
</comment>
<accession>C1CXG2</accession>
<protein>
    <recommendedName>
        <fullName evidence="1">Small ribosomal subunit protein uS19</fullName>
    </recommendedName>
    <alternativeName>
        <fullName evidence="3">30S ribosomal protein S19</fullName>
    </alternativeName>
</protein>
<sequence>MPRSLKKGPFVDDHLLKKVDAQNERKDKRVIKTWSRRSTIVPEMIGHTIAVHNGKQHVPVFVNEQMIGHKLGEFSPTRSYRGHGADKNAKGSKKK</sequence>
<gene>
    <name evidence="1" type="primary">rpsS</name>
    <name type="ordered locus">Deide_18910</name>
</gene>
<evidence type="ECO:0000255" key="1">
    <source>
        <dbReference type="HAMAP-Rule" id="MF_00531"/>
    </source>
</evidence>
<evidence type="ECO:0000256" key="2">
    <source>
        <dbReference type="SAM" id="MobiDB-lite"/>
    </source>
</evidence>
<evidence type="ECO:0000305" key="3"/>
<name>RS19_DEIDV</name>
<feature type="chain" id="PRO_1000211799" description="Small ribosomal subunit protein uS19">
    <location>
        <begin position="1"/>
        <end position="95"/>
    </location>
</feature>
<feature type="region of interest" description="Disordered" evidence="2">
    <location>
        <begin position="73"/>
        <end position="95"/>
    </location>
</feature>
<proteinExistence type="inferred from homology"/>